<organism>
    <name type="scientific">Tropheryma whipplei (strain Twist)</name>
    <name type="common">Whipple's bacillus</name>
    <dbReference type="NCBI Taxonomy" id="203267"/>
    <lineage>
        <taxon>Bacteria</taxon>
        <taxon>Bacillati</taxon>
        <taxon>Actinomycetota</taxon>
        <taxon>Actinomycetes</taxon>
        <taxon>Micrococcales</taxon>
        <taxon>Tropherymataceae</taxon>
        <taxon>Tropheryma</taxon>
    </lineage>
</organism>
<keyword id="KW-0064">Aspartyl protease</keyword>
<keyword id="KW-1003">Cell membrane</keyword>
<keyword id="KW-0378">Hydrolase</keyword>
<keyword id="KW-0472">Membrane</keyword>
<keyword id="KW-0645">Protease</keyword>
<keyword id="KW-1185">Reference proteome</keyword>
<keyword id="KW-0812">Transmembrane</keyword>
<keyword id="KW-1133">Transmembrane helix</keyword>
<protein>
    <recommendedName>
        <fullName evidence="1">Lipoprotein signal peptidase</fullName>
        <ecNumber evidence="1">3.4.23.36</ecNumber>
    </recommendedName>
    <alternativeName>
        <fullName evidence="1">Prolipoprotein signal peptidase</fullName>
    </alternativeName>
    <alternativeName>
        <fullName evidence="1">Signal peptidase II</fullName>
        <shortName evidence="1">SPase II</shortName>
    </alternativeName>
</protein>
<evidence type="ECO:0000255" key="1">
    <source>
        <dbReference type="HAMAP-Rule" id="MF_00161"/>
    </source>
</evidence>
<comment type="function">
    <text evidence="1">This protein specifically catalyzes the removal of signal peptides from prolipoproteins.</text>
</comment>
<comment type="catalytic activity">
    <reaction evidence="1">
        <text>Release of signal peptides from bacterial membrane prolipoproteins. Hydrolyzes -Xaa-Yaa-Zaa-|-(S,diacylglyceryl)Cys-, in which Xaa is hydrophobic (preferably Leu), and Yaa (Ala or Ser) and Zaa (Gly or Ala) have small, neutral side chains.</text>
        <dbReference type="EC" id="3.4.23.36"/>
    </reaction>
</comment>
<comment type="pathway">
    <text evidence="1">Protein modification; lipoprotein biosynthesis (signal peptide cleavage).</text>
</comment>
<comment type="subcellular location">
    <subcellularLocation>
        <location evidence="1">Cell membrane</location>
        <topology evidence="1">Multi-pass membrane protein</topology>
    </subcellularLocation>
</comment>
<comment type="similarity">
    <text evidence="1">Belongs to the peptidase A8 family.</text>
</comment>
<gene>
    <name evidence="1" type="primary">lspA</name>
    <name type="ordered locus">TWT_512</name>
</gene>
<dbReference type="EC" id="3.4.23.36" evidence="1"/>
<dbReference type="EMBL" id="AE014184">
    <property type="protein sequence ID" value="AAO44609.1"/>
    <property type="molecule type" value="Genomic_DNA"/>
</dbReference>
<dbReference type="SMR" id="Q83G22"/>
<dbReference type="STRING" id="203267.TWT_512"/>
<dbReference type="KEGG" id="twh:TWT_512"/>
<dbReference type="eggNOG" id="COG0597">
    <property type="taxonomic scope" value="Bacteria"/>
</dbReference>
<dbReference type="HOGENOM" id="CLU_083252_2_2_11"/>
<dbReference type="OrthoDB" id="4308908at2"/>
<dbReference type="UniPathway" id="UPA00665"/>
<dbReference type="Proteomes" id="UP000002200">
    <property type="component" value="Chromosome"/>
</dbReference>
<dbReference type="GO" id="GO:0005886">
    <property type="term" value="C:plasma membrane"/>
    <property type="evidence" value="ECO:0007669"/>
    <property type="project" value="UniProtKB-SubCell"/>
</dbReference>
<dbReference type="GO" id="GO:0004190">
    <property type="term" value="F:aspartic-type endopeptidase activity"/>
    <property type="evidence" value="ECO:0007669"/>
    <property type="project" value="UniProtKB-UniRule"/>
</dbReference>
<dbReference type="GO" id="GO:0006508">
    <property type="term" value="P:proteolysis"/>
    <property type="evidence" value="ECO:0007669"/>
    <property type="project" value="UniProtKB-KW"/>
</dbReference>
<dbReference type="HAMAP" id="MF_00161">
    <property type="entry name" value="LspA"/>
    <property type="match status" value="1"/>
</dbReference>
<dbReference type="InterPro" id="IPR001872">
    <property type="entry name" value="Peptidase_A8"/>
</dbReference>
<dbReference type="PANTHER" id="PTHR33695">
    <property type="entry name" value="LIPOPROTEIN SIGNAL PEPTIDASE"/>
    <property type="match status" value="1"/>
</dbReference>
<dbReference type="PANTHER" id="PTHR33695:SF1">
    <property type="entry name" value="LIPOPROTEIN SIGNAL PEPTIDASE"/>
    <property type="match status" value="1"/>
</dbReference>
<dbReference type="Pfam" id="PF01252">
    <property type="entry name" value="Peptidase_A8"/>
    <property type="match status" value="1"/>
</dbReference>
<dbReference type="PRINTS" id="PR00781">
    <property type="entry name" value="LIPOSIGPTASE"/>
</dbReference>
<proteinExistence type="inferred from homology"/>
<sequence length="150" mass="16609">MTTRTLRFYALVGFLVFLDQVTKYLAHAYLARDFIVIPNLFRLTLAKNSGAAFSFGTGFSWLFFLLGIIALIFIGWFLPRTTGSIVFLALLQGGIAGNVFDRLFKPPYFGNGEVVDFLNTPLLSGVVFNIADLFILAGVFGTFLFLKGSK</sequence>
<reference key="1">
    <citation type="journal article" date="2003" name="Genome Res.">
        <title>Tropheryma whipplei twist: a human pathogenic Actinobacteria with a reduced genome.</title>
        <authorList>
            <person name="Raoult D."/>
            <person name="Ogata H."/>
            <person name="Audic S."/>
            <person name="Robert C."/>
            <person name="Suhre K."/>
            <person name="Drancourt M."/>
            <person name="Claverie J.-M."/>
        </authorList>
    </citation>
    <scope>NUCLEOTIDE SEQUENCE [LARGE SCALE GENOMIC DNA]</scope>
    <source>
        <strain>Twist</strain>
    </source>
</reference>
<accession>Q83G22</accession>
<feature type="chain" id="PRO_0000289456" description="Lipoprotein signal peptidase">
    <location>
        <begin position="1"/>
        <end position="150"/>
    </location>
</feature>
<feature type="transmembrane region" description="Helical" evidence="1">
    <location>
        <begin position="8"/>
        <end position="28"/>
    </location>
</feature>
<feature type="transmembrane region" description="Helical" evidence="1">
    <location>
        <begin position="58"/>
        <end position="78"/>
    </location>
</feature>
<feature type="transmembrane region" description="Helical" evidence="1">
    <location>
        <begin position="81"/>
        <end position="101"/>
    </location>
</feature>
<feature type="transmembrane region" description="Helical" evidence="1">
    <location>
        <begin position="126"/>
        <end position="146"/>
    </location>
</feature>
<feature type="active site" evidence="1">
    <location>
        <position position="116"/>
    </location>
</feature>
<feature type="active site" evidence="1">
    <location>
        <position position="132"/>
    </location>
</feature>
<name>LSPA_TROWT</name>